<accession>B2TZR6</accession>
<organism>
    <name type="scientific">Shigella boydii serotype 18 (strain CDC 3083-94 / BS512)</name>
    <dbReference type="NCBI Taxonomy" id="344609"/>
    <lineage>
        <taxon>Bacteria</taxon>
        <taxon>Pseudomonadati</taxon>
        <taxon>Pseudomonadota</taxon>
        <taxon>Gammaproteobacteria</taxon>
        <taxon>Enterobacterales</taxon>
        <taxon>Enterobacteriaceae</taxon>
        <taxon>Shigella</taxon>
    </lineage>
</organism>
<protein>
    <recommendedName>
        <fullName evidence="1">Phosphopentomutase</fullName>
        <ecNumber evidence="1">5.4.2.7</ecNumber>
    </recommendedName>
    <alternativeName>
        <fullName evidence="1">Phosphodeoxyribomutase</fullName>
    </alternativeName>
</protein>
<name>DEOB_SHIB3</name>
<dbReference type="EC" id="5.4.2.7" evidence="1"/>
<dbReference type="EMBL" id="CP001063">
    <property type="protein sequence ID" value="ACD09837.1"/>
    <property type="molecule type" value="Genomic_DNA"/>
</dbReference>
<dbReference type="RefSeq" id="WP_000816471.1">
    <property type="nucleotide sequence ID" value="NC_010658.1"/>
</dbReference>
<dbReference type="SMR" id="B2TZR6"/>
<dbReference type="STRING" id="344609.SbBS512_E4930"/>
<dbReference type="GeneID" id="89519362"/>
<dbReference type="KEGG" id="sbc:SbBS512_E4930"/>
<dbReference type="HOGENOM" id="CLU_053861_0_0_6"/>
<dbReference type="UniPathway" id="UPA00002">
    <property type="reaction ID" value="UER00467"/>
</dbReference>
<dbReference type="Proteomes" id="UP000001030">
    <property type="component" value="Chromosome"/>
</dbReference>
<dbReference type="GO" id="GO:0005829">
    <property type="term" value="C:cytosol"/>
    <property type="evidence" value="ECO:0007669"/>
    <property type="project" value="TreeGrafter"/>
</dbReference>
<dbReference type="GO" id="GO:0000287">
    <property type="term" value="F:magnesium ion binding"/>
    <property type="evidence" value="ECO:0007669"/>
    <property type="project" value="InterPro"/>
</dbReference>
<dbReference type="GO" id="GO:0030145">
    <property type="term" value="F:manganese ion binding"/>
    <property type="evidence" value="ECO:0007669"/>
    <property type="project" value="UniProtKB-UniRule"/>
</dbReference>
<dbReference type="GO" id="GO:0008973">
    <property type="term" value="F:phosphopentomutase activity"/>
    <property type="evidence" value="ECO:0007669"/>
    <property type="project" value="UniProtKB-UniRule"/>
</dbReference>
<dbReference type="GO" id="GO:0006018">
    <property type="term" value="P:2-deoxyribose 1-phosphate catabolic process"/>
    <property type="evidence" value="ECO:0007669"/>
    <property type="project" value="UniProtKB-UniRule"/>
</dbReference>
<dbReference type="GO" id="GO:0006015">
    <property type="term" value="P:5-phosphoribose 1-diphosphate biosynthetic process"/>
    <property type="evidence" value="ECO:0007669"/>
    <property type="project" value="UniProtKB-UniPathway"/>
</dbReference>
<dbReference type="GO" id="GO:0043094">
    <property type="term" value="P:metabolic compound salvage"/>
    <property type="evidence" value="ECO:0007669"/>
    <property type="project" value="InterPro"/>
</dbReference>
<dbReference type="GO" id="GO:0009117">
    <property type="term" value="P:nucleotide metabolic process"/>
    <property type="evidence" value="ECO:0007669"/>
    <property type="project" value="InterPro"/>
</dbReference>
<dbReference type="CDD" id="cd16009">
    <property type="entry name" value="PPM"/>
    <property type="match status" value="1"/>
</dbReference>
<dbReference type="FunFam" id="3.30.70.1250:FF:000001">
    <property type="entry name" value="Phosphopentomutase"/>
    <property type="match status" value="1"/>
</dbReference>
<dbReference type="Gene3D" id="3.40.720.10">
    <property type="entry name" value="Alkaline Phosphatase, subunit A"/>
    <property type="match status" value="1"/>
</dbReference>
<dbReference type="Gene3D" id="3.30.70.1250">
    <property type="entry name" value="Phosphopentomutase"/>
    <property type="match status" value="1"/>
</dbReference>
<dbReference type="HAMAP" id="MF_00740">
    <property type="entry name" value="Phosphopentomut"/>
    <property type="match status" value="1"/>
</dbReference>
<dbReference type="InterPro" id="IPR017850">
    <property type="entry name" value="Alkaline_phosphatase_core_sf"/>
</dbReference>
<dbReference type="InterPro" id="IPR010045">
    <property type="entry name" value="DeoB"/>
</dbReference>
<dbReference type="InterPro" id="IPR006124">
    <property type="entry name" value="Metalloenzyme"/>
</dbReference>
<dbReference type="InterPro" id="IPR024052">
    <property type="entry name" value="Phosphopentomutase_DeoB_cap_sf"/>
</dbReference>
<dbReference type="NCBIfam" id="TIGR01696">
    <property type="entry name" value="deoB"/>
    <property type="match status" value="1"/>
</dbReference>
<dbReference type="NCBIfam" id="NF003766">
    <property type="entry name" value="PRK05362.1"/>
    <property type="match status" value="1"/>
</dbReference>
<dbReference type="PANTHER" id="PTHR21110">
    <property type="entry name" value="PHOSPHOPENTOMUTASE"/>
    <property type="match status" value="1"/>
</dbReference>
<dbReference type="PANTHER" id="PTHR21110:SF0">
    <property type="entry name" value="PHOSPHOPENTOMUTASE"/>
    <property type="match status" value="1"/>
</dbReference>
<dbReference type="Pfam" id="PF01676">
    <property type="entry name" value="Metalloenzyme"/>
    <property type="match status" value="1"/>
</dbReference>
<dbReference type="PIRSF" id="PIRSF001491">
    <property type="entry name" value="Ppentomutase"/>
    <property type="match status" value="1"/>
</dbReference>
<dbReference type="SUPFAM" id="SSF53649">
    <property type="entry name" value="Alkaline phosphatase-like"/>
    <property type="match status" value="1"/>
</dbReference>
<dbReference type="SUPFAM" id="SSF143856">
    <property type="entry name" value="DeoB insert domain-like"/>
    <property type="match status" value="1"/>
</dbReference>
<reference key="1">
    <citation type="submission" date="2008-05" db="EMBL/GenBank/DDBJ databases">
        <title>Complete sequence of Shigella boydii serotype 18 strain BS512.</title>
        <authorList>
            <person name="Rasko D.A."/>
            <person name="Rosovitz M."/>
            <person name="Maurelli A.T."/>
            <person name="Myers G."/>
            <person name="Seshadri R."/>
            <person name="Cer R."/>
            <person name="Jiang L."/>
            <person name="Ravel J."/>
            <person name="Sebastian Y."/>
        </authorList>
    </citation>
    <scope>NUCLEOTIDE SEQUENCE [LARGE SCALE GENOMIC DNA]</scope>
    <source>
        <strain>CDC 3083-94 / BS512</strain>
    </source>
</reference>
<evidence type="ECO:0000255" key="1">
    <source>
        <dbReference type="HAMAP-Rule" id="MF_00740"/>
    </source>
</evidence>
<sequence length="407" mass="44370">MKRAFIMVLDSFGIGATEDAERFGDVGADTLGHIAEACAKGEADNGRKGPLNLPNLTRLGLAKAHEGSTGFIPAGMDGNAEVIGAYAWAHEMSSGKDTPSGHWEIAGVPVLFEWGYFSDHENSFPQELLDKLVERANLPGYLGNCHSSGTVILDQLGEEHMKTGKPIFYTSADSVFQIACHEETFGLDKLYELCEIAREELTNGGYNIGRVIARPFIGDKAGNFQRTGNRHDLAVEPPAPTVLQKLVDEKHGQVVSVGKIADIYANCGITKKVKATGLDALFDATIKEMKEAGDNTIVFTNFVDFDSSWGHRRDVAGYAAGLELFDRRLPELMSLLRDDDILILTADHGCDPTWTGTDHTREHIPVLVYGPKVKPGSLGHRETFADIGQTLAKYFGTSDMEYGKAMF</sequence>
<gene>
    <name evidence="1" type="primary">deoB</name>
    <name type="ordered locus">SbBS512_E4930</name>
</gene>
<feature type="chain" id="PRO_1000133101" description="Phosphopentomutase">
    <location>
        <begin position="1"/>
        <end position="407"/>
    </location>
</feature>
<feature type="binding site" evidence="1">
    <location>
        <position position="10"/>
    </location>
    <ligand>
        <name>Mn(2+)</name>
        <dbReference type="ChEBI" id="CHEBI:29035"/>
        <label>1</label>
    </ligand>
</feature>
<feature type="binding site" evidence="1">
    <location>
        <position position="306"/>
    </location>
    <ligand>
        <name>Mn(2+)</name>
        <dbReference type="ChEBI" id="CHEBI:29035"/>
        <label>2</label>
    </ligand>
</feature>
<feature type="binding site" evidence="1">
    <location>
        <position position="311"/>
    </location>
    <ligand>
        <name>Mn(2+)</name>
        <dbReference type="ChEBI" id="CHEBI:29035"/>
        <label>2</label>
    </ligand>
</feature>
<feature type="binding site" evidence="1">
    <location>
        <position position="347"/>
    </location>
    <ligand>
        <name>Mn(2+)</name>
        <dbReference type="ChEBI" id="CHEBI:29035"/>
        <label>1</label>
    </ligand>
</feature>
<feature type="binding site" evidence="1">
    <location>
        <position position="348"/>
    </location>
    <ligand>
        <name>Mn(2+)</name>
        <dbReference type="ChEBI" id="CHEBI:29035"/>
        <label>1</label>
    </ligand>
</feature>
<feature type="binding site" evidence="1">
    <location>
        <position position="359"/>
    </location>
    <ligand>
        <name>Mn(2+)</name>
        <dbReference type="ChEBI" id="CHEBI:29035"/>
        <label>2</label>
    </ligand>
</feature>
<proteinExistence type="inferred from homology"/>
<comment type="function">
    <text evidence="1">Isomerase that catalyzes the conversion of deoxy-ribose 1-phosphate (dRib-1-P) and ribose 1-phosphate (Rib-1-P) to deoxy-ribose 5-phosphate (dRib-5-P) and ribose 5-phosphate (Rib-5-P), respectively.</text>
</comment>
<comment type="catalytic activity">
    <reaction evidence="1">
        <text>2-deoxy-alpha-D-ribose 1-phosphate = 2-deoxy-D-ribose 5-phosphate</text>
        <dbReference type="Rhea" id="RHEA:27658"/>
        <dbReference type="ChEBI" id="CHEBI:57259"/>
        <dbReference type="ChEBI" id="CHEBI:62877"/>
        <dbReference type="EC" id="5.4.2.7"/>
    </reaction>
</comment>
<comment type="catalytic activity">
    <reaction evidence="1">
        <text>alpha-D-ribose 1-phosphate = D-ribose 5-phosphate</text>
        <dbReference type="Rhea" id="RHEA:18793"/>
        <dbReference type="ChEBI" id="CHEBI:57720"/>
        <dbReference type="ChEBI" id="CHEBI:78346"/>
        <dbReference type="EC" id="5.4.2.7"/>
    </reaction>
</comment>
<comment type="cofactor">
    <cofactor evidence="1">
        <name>Mn(2+)</name>
        <dbReference type="ChEBI" id="CHEBI:29035"/>
    </cofactor>
    <text evidence="1">Binds 2 manganese ions.</text>
</comment>
<comment type="pathway">
    <text evidence="1">Carbohydrate degradation; 2-deoxy-D-ribose 1-phosphate degradation; D-glyceraldehyde 3-phosphate and acetaldehyde from 2-deoxy-alpha-D-ribose 1-phosphate: step 1/2.</text>
</comment>
<comment type="subcellular location">
    <subcellularLocation>
        <location evidence="1">Cytoplasm</location>
    </subcellularLocation>
</comment>
<comment type="similarity">
    <text evidence="1">Belongs to the phosphopentomutase family.</text>
</comment>
<keyword id="KW-0963">Cytoplasm</keyword>
<keyword id="KW-0413">Isomerase</keyword>
<keyword id="KW-0464">Manganese</keyword>
<keyword id="KW-0479">Metal-binding</keyword>
<keyword id="KW-1185">Reference proteome</keyword>